<dbReference type="EC" id="7.1.2.2" evidence="1"/>
<dbReference type="EMBL" id="CP001185">
    <property type="protein sequence ID" value="ACJ75056.1"/>
    <property type="molecule type" value="Genomic_DNA"/>
</dbReference>
<dbReference type="RefSeq" id="WP_004100563.1">
    <property type="nucleotide sequence ID" value="NC_011653.1"/>
</dbReference>
<dbReference type="SMR" id="B7IG42"/>
<dbReference type="STRING" id="484019.THA_569"/>
<dbReference type="KEGG" id="taf:THA_569"/>
<dbReference type="eggNOG" id="COG0056">
    <property type="taxonomic scope" value="Bacteria"/>
</dbReference>
<dbReference type="HOGENOM" id="CLU_010091_2_1_0"/>
<dbReference type="OrthoDB" id="9803053at2"/>
<dbReference type="Proteomes" id="UP000002453">
    <property type="component" value="Chromosome"/>
</dbReference>
<dbReference type="GO" id="GO:0005886">
    <property type="term" value="C:plasma membrane"/>
    <property type="evidence" value="ECO:0007669"/>
    <property type="project" value="UniProtKB-SubCell"/>
</dbReference>
<dbReference type="GO" id="GO:0045259">
    <property type="term" value="C:proton-transporting ATP synthase complex"/>
    <property type="evidence" value="ECO:0007669"/>
    <property type="project" value="UniProtKB-KW"/>
</dbReference>
<dbReference type="GO" id="GO:0043531">
    <property type="term" value="F:ADP binding"/>
    <property type="evidence" value="ECO:0007669"/>
    <property type="project" value="TreeGrafter"/>
</dbReference>
<dbReference type="GO" id="GO:0005524">
    <property type="term" value="F:ATP binding"/>
    <property type="evidence" value="ECO:0007669"/>
    <property type="project" value="UniProtKB-UniRule"/>
</dbReference>
<dbReference type="GO" id="GO:0046933">
    <property type="term" value="F:proton-transporting ATP synthase activity, rotational mechanism"/>
    <property type="evidence" value="ECO:0007669"/>
    <property type="project" value="UniProtKB-UniRule"/>
</dbReference>
<dbReference type="CDD" id="cd18113">
    <property type="entry name" value="ATP-synt_F1_alpha_C"/>
    <property type="match status" value="1"/>
</dbReference>
<dbReference type="CDD" id="cd18116">
    <property type="entry name" value="ATP-synt_F1_alpha_N"/>
    <property type="match status" value="1"/>
</dbReference>
<dbReference type="CDD" id="cd01132">
    <property type="entry name" value="F1-ATPase_alpha_CD"/>
    <property type="match status" value="1"/>
</dbReference>
<dbReference type="FunFam" id="1.20.150.20:FF:000001">
    <property type="entry name" value="ATP synthase subunit alpha"/>
    <property type="match status" value="1"/>
</dbReference>
<dbReference type="FunFam" id="2.40.30.20:FF:000001">
    <property type="entry name" value="ATP synthase subunit alpha"/>
    <property type="match status" value="1"/>
</dbReference>
<dbReference type="FunFam" id="3.40.50.300:FF:000002">
    <property type="entry name" value="ATP synthase subunit alpha"/>
    <property type="match status" value="1"/>
</dbReference>
<dbReference type="Gene3D" id="2.40.30.20">
    <property type="match status" value="1"/>
</dbReference>
<dbReference type="Gene3D" id="1.20.150.20">
    <property type="entry name" value="ATP synthase alpha/beta chain, C-terminal domain"/>
    <property type="match status" value="1"/>
</dbReference>
<dbReference type="Gene3D" id="3.40.50.300">
    <property type="entry name" value="P-loop containing nucleotide triphosphate hydrolases"/>
    <property type="match status" value="1"/>
</dbReference>
<dbReference type="HAMAP" id="MF_01346">
    <property type="entry name" value="ATP_synth_alpha_bact"/>
    <property type="match status" value="1"/>
</dbReference>
<dbReference type="InterPro" id="IPR023366">
    <property type="entry name" value="ATP_synth_asu-like_sf"/>
</dbReference>
<dbReference type="InterPro" id="IPR000793">
    <property type="entry name" value="ATP_synth_asu_C"/>
</dbReference>
<dbReference type="InterPro" id="IPR038376">
    <property type="entry name" value="ATP_synth_asu_C_sf"/>
</dbReference>
<dbReference type="InterPro" id="IPR033732">
    <property type="entry name" value="ATP_synth_F1_a_nt-bd_dom"/>
</dbReference>
<dbReference type="InterPro" id="IPR005294">
    <property type="entry name" value="ATP_synth_F1_asu"/>
</dbReference>
<dbReference type="InterPro" id="IPR020003">
    <property type="entry name" value="ATPase_a/bsu_AS"/>
</dbReference>
<dbReference type="InterPro" id="IPR004100">
    <property type="entry name" value="ATPase_F1/V1/A1_a/bsu_N"/>
</dbReference>
<dbReference type="InterPro" id="IPR036121">
    <property type="entry name" value="ATPase_F1/V1/A1_a/bsu_N_sf"/>
</dbReference>
<dbReference type="InterPro" id="IPR000194">
    <property type="entry name" value="ATPase_F1/V1/A1_a/bsu_nucl-bd"/>
</dbReference>
<dbReference type="InterPro" id="IPR027417">
    <property type="entry name" value="P-loop_NTPase"/>
</dbReference>
<dbReference type="NCBIfam" id="TIGR00962">
    <property type="entry name" value="atpA"/>
    <property type="match status" value="1"/>
</dbReference>
<dbReference type="NCBIfam" id="NF009884">
    <property type="entry name" value="PRK13343.1"/>
    <property type="match status" value="1"/>
</dbReference>
<dbReference type="PANTHER" id="PTHR48082">
    <property type="entry name" value="ATP SYNTHASE SUBUNIT ALPHA, MITOCHONDRIAL"/>
    <property type="match status" value="1"/>
</dbReference>
<dbReference type="PANTHER" id="PTHR48082:SF2">
    <property type="entry name" value="ATP SYNTHASE SUBUNIT ALPHA, MITOCHONDRIAL"/>
    <property type="match status" value="1"/>
</dbReference>
<dbReference type="Pfam" id="PF00006">
    <property type="entry name" value="ATP-synt_ab"/>
    <property type="match status" value="1"/>
</dbReference>
<dbReference type="Pfam" id="PF00306">
    <property type="entry name" value="ATP-synt_ab_C"/>
    <property type="match status" value="1"/>
</dbReference>
<dbReference type="Pfam" id="PF02874">
    <property type="entry name" value="ATP-synt_ab_N"/>
    <property type="match status" value="1"/>
</dbReference>
<dbReference type="PIRSF" id="PIRSF039088">
    <property type="entry name" value="F_ATPase_subunit_alpha"/>
    <property type="match status" value="1"/>
</dbReference>
<dbReference type="SUPFAM" id="SSF47917">
    <property type="entry name" value="C-terminal domain of alpha and beta subunits of F1 ATP synthase"/>
    <property type="match status" value="1"/>
</dbReference>
<dbReference type="SUPFAM" id="SSF50615">
    <property type="entry name" value="N-terminal domain of alpha and beta subunits of F1 ATP synthase"/>
    <property type="match status" value="1"/>
</dbReference>
<dbReference type="SUPFAM" id="SSF52540">
    <property type="entry name" value="P-loop containing nucleoside triphosphate hydrolases"/>
    <property type="match status" value="1"/>
</dbReference>
<dbReference type="PROSITE" id="PS00152">
    <property type="entry name" value="ATPASE_ALPHA_BETA"/>
    <property type="match status" value="1"/>
</dbReference>
<accession>B7IG42</accession>
<evidence type="ECO:0000255" key="1">
    <source>
        <dbReference type="HAMAP-Rule" id="MF_01346"/>
    </source>
</evidence>
<proteinExistence type="inferred from homology"/>
<sequence length="507" mass="55883">MRINPGEIVKVLESKIEGFKEEINLEDVGKVIQVGDGIARAYGLNNVMANEMVEFVETGTIGVAFNLEEDNVGIIILGDYKGIKEGHTVRRLKKIMQVPVGEALLGRVVNPLGEPVDGLGPIEAKEFRDVEVKAPGVIYRKPVDTPLQTGIKIIDALIPIGRGQRELIIGDRQTGKTAIAIDTIINQKGKGVYCVYVAIGQKASAVARLVSKLKEAGAMEYTTVVVASAADNAALQYIAPYAGCAMGEYFLYNGKDALVIYDDLSKHAVAYRQLSLLLRRPPGREAYPGDVFYLHSRLLERAARLDEKYGGGSLTALPIIETQANDISAYIPTNVISITDGQIYLEPSLFYAGQRPAVNIGLSVSRVGGAAQIKAMKKVAGSLKLDLAQYQELETFAQFATELDPATQAQITRGQRLMELMKQEQYAPMEVEEQVAVLYAGINGYLDDLEVEKVRLFEKKLIEFLKDKKSEILNKIREEKDLSEETEKMLKEAIEEFKSEFVKVYGK</sequence>
<keyword id="KW-0066">ATP synthesis</keyword>
<keyword id="KW-0067">ATP-binding</keyword>
<keyword id="KW-0997">Cell inner membrane</keyword>
<keyword id="KW-1003">Cell membrane</keyword>
<keyword id="KW-0139">CF(1)</keyword>
<keyword id="KW-0375">Hydrogen ion transport</keyword>
<keyword id="KW-0406">Ion transport</keyword>
<keyword id="KW-0472">Membrane</keyword>
<keyword id="KW-0547">Nucleotide-binding</keyword>
<keyword id="KW-1185">Reference proteome</keyword>
<keyword id="KW-1278">Translocase</keyword>
<keyword id="KW-0813">Transport</keyword>
<gene>
    <name evidence="1" type="primary">atpA</name>
    <name type="ordered locus">THA_569</name>
</gene>
<name>ATPA_THEAB</name>
<organism>
    <name type="scientific">Thermosipho africanus (strain TCF52B)</name>
    <dbReference type="NCBI Taxonomy" id="484019"/>
    <lineage>
        <taxon>Bacteria</taxon>
        <taxon>Thermotogati</taxon>
        <taxon>Thermotogota</taxon>
        <taxon>Thermotogae</taxon>
        <taxon>Thermotogales</taxon>
        <taxon>Fervidobacteriaceae</taxon>
        <taxon>Thermosipho</taxon>
    </lineage>
</organism>
<reference key="1">
    <citation type="journal article" date="2009" name="J. Bacteriol.">
        <title>The genome of Thermosipho africanus TCF52B: lateral genetic connections to the Firmicutes and Archaea.</title>
        <authorList>
            <person name="Nesboe C.L."/>
            <person name="Bapteste E."/>
            <person name="Curtis B."/>
            <person name="Dahle H."/>
            <person name="Lopez P."/>
            <person name="Macleod D."/>
            <person name="Dlutek M."/>
            <person name="Bowman S."/>
            <person name="Zhaxybayeva O."/>
            <person name="Birkeland N.-K."/>
            <person name="Doolittle W.F."/>
        </authorList>
    </citation>
    <scope>NUCLEOTIDE SEQUENCE [LARGE SCALE GENOMIC DNA]</scope>
    <source>
        <strain>TCF52B</strain>
    </source>
</reference>
<comment type="function">
    <text evidence="1">Produces ATP from ADP in the presence of a proton gradient across the membrane. The alpha chain is a regulatory subunit.</text>
</comment>
<comment type="catalytic activity">
    <reaction evidence="1">
        <text>ATP + H2O + 4 H(+)(in) = ADP + phosphate + 5 H(+)(out)</text>
        <dbReference type="Rhea" id="RHEA:57720"/>
        <dbReference type="ChEBI" id="CHEBI:15377"/>
        <dbReference type="ChEBI" id="CHEBI:15378"/>
        <dbReference type="ChEBI" id="CHEBI:30616"/>
        <dbReference type="ChEBI" id="CHEBI:43474"/>
        <dbReference type="ChEBI" id="CHEBI:456216"/>
        <dbReference type="EC" id="7.1.2.2"/>
    </reaction>
</comment>
<comment type="subunit">
    <text evidence="1">F-type ATPases have 2 components, CF(1) - the catalytic core - and CF(0) - the membrane proton channel. CF(1) has five subunits: alpha(3), beta(3), gamma(1), delta(1), epsilon(1). CF(0) has three main subunits: a(1), b(2) and c(9-12). The alpha and beta chains form an alternating ring which encloses part of the gamma chain. CF(1) is attached to CF(0) by a central stalk formed by the gamma and epsilon chains, while a peripheral stalk is formed by the delta and b chains.</text>
</comment>
<comment type="subcellular location">
    <subcellularLocation>
        <location evidence="1">Cell inner membrane</location>
        <topology evidence="1">Peripheral membrane protein</topology>
    </subcellularLocation>
</comment>
<comment type="similarity">
    <text evidence="1">Belongs to the ATPase alpha/beta chains family.</text>
</comment>
<protein>
    <recommendedName>
        <fullName evidence="1">ATP synthase subunit alpha</fullName>
        <ecNumber evidence="1">7.1.2.2</ecNumber>
    </recommendedName>
    <alternativeName>
        <fullName evidence="1">ATP synthase F1 sector subunit alpha</fullName>
    </alternativeName>
    <alternativeName>
        <fullName evidence="1">F-ATPase subunit alpha</fullName>
    </alternativeName>
</protein>
<feature type="chain" id="PRO_1000143448" description="ATP synthase subunit alpha">
    <location>
        <begin position="1"/>
        <end position="507"/>
    </location>
</feature>
<feature type="binding site" evidence="1">
    <location>
        <begin position="170"/>
        <end position="177"/>
    </location>
    <ligand>
        <name>ATP</name>
        <dbReference type="ChEBI" id="CHEBI:30616"/>
    </ligand>
</feature>
<feature type="site" description="Required for activity" evidence="1">
    <location>
        <position position="363"/>
    </location>
</feature>